<sequence length="414" mass="46396">MSGAPPSYSFVALPPRAKDGLVVFGKNSARPRDEVQEVVYFPAVDHEAESKVECTYISIDQVPRTHAIVISRPAWLWGAEMGANEHGVCIANEAINAREPAAETEALLGMDLVRLGLERGTTAKEALDIIVSLLDEHGQGGNYYEDAHSCHSFQSAYLLVDRDEAWVLETVGKYWAAERITEGVRCICNHLSLTTKMDEEHPELRTYAQSQGWWTGEDEFNFAQVFSPADDHLDCCAGKDSLEKQEESITVQTMINILRDKASGVCIDSESFLTTASIVSVLPQNRSSPCIHYFTGTPDPSRSIFKPFIFVDDVKLVPKAQSPCFGDDDPAKKEPRFQEKPDRRHELYKAHEWARAVIESDQEQGRTLRKTMLELEKQGLEAMEEILSSPEPPDPAEVGDLFYDCVDTEMKFFK</sequence>
<proteinExistence type="evidence at protein level"/>
<protein>
    <recommendedName>
        <fullName>Secernin-1</fullName>
    </recommendedName>
</protein>
<feature type="chain" id="PRO_0000271394" description="Secernin-1">
    <location>
        <begin position="1"/>
        <end position="414"/>
    </location>
</feature>
<name>SCRN1_RAT</name>
<evidence type="ECO:0000250" key="1"/>
<evidence type="ECO:0000305" key="2"/>
<comment type="function">
    <text evidence="1">Regulates exocytosis in mast cells. Increases both the extent of secretion and the sensitivity of mast cells to stimulation with calcium (By similarity).</text>
</comment>
<comment type="subcellular location">
    <subcellularLocation>
        <location evidence="1">Cytoplasm</location>
    </subcellularLocation>
</comment>
<comment type="miscellaneous">
    <text>'Secern' is an archaic English term meaning 'secrete'.</text>
</comment>
<comment type="similarity">
    <text evidence="2">Belongs to the peptidase C69 family. Secernin subfamily.</text>
</comment>
<gene>
    <name type="primary">Scrn1</name>
</gene>
<dbReference type="EMBL" id="BC079152">
    <property type="protein sequence ID" value="AAH79152.1"/>
    <property type="molecule type" value="mRNA"/>
</dbReference>
<dbReference type="RefSeq" id="NP_001020234.1">
    <property type="nucleotide sequence ID" value="NM_001025063.1"/>
</dbReference>
<dbReference type="RefSeq" id="XP_006236574.1">
    <property type="nucleotide sequence ID" value="XM_006236512.5"/>
</dbReference>
<dbReference type="RefSeq" id="XP_038964182.1">
    <property type="nucleotide sequence ID" value="XM_039108254.2"/>
</dbReference>
<dbReference type="SMR" id="Q6AY84"/>
<dbReference type="FunCoup" id="Q6AY84">
    <property type="interactions" value="931"/>
</dbReference>
<dbReference type="STRING" id="10116.ENSRNOP00000013088"/>
<dbReference type="iPTMnet" id="Q6AY84"/>
<dbReference type="PhosphoSitePlus" id="Q6AY84"/>
<dbReference type="SwissPalm" id="Q6AY84"/>
<dbReference type="PaxDb" id="10116-ENSRNOP00000013088"/>
<dbReference type="Ensembl" id="ENSRNOT00000013088.6">
    <property type="protein sequence ID" value="ENSRNOP00000013088.3"/>
    <property type="gene ID" value="ENSRNOG00000009636.6"/>
</dbReference>
<dbReference type="GeneID" id="502776"/>
<dbReference type="KEGG" id="rno:502776"/>
<dbReference type="UCSC" id="RGD:1560999">
    <property type="organism name" value="rat"/>
</dbReference>
<dbReference type="AGR" id="RGD:1560999"/>
<dbReference type="CTD" id="9805"/>
<dbReference type="RGD" id="1560999">
    <property type="gene designation" value="Scrn1"/>
</dbReference>
<dbReference type="eggNOG" id="ENOG502QTSN">
    <property type="taxonomic scope" value="Eukaryota"/>
</dbReference>
<dbReference type="GeneTree" id="ENSGT00390000013474"/>
<dbReference type="HOGENOM" id="CLU_046840_0_0_1"/>
<dbReference type="InParanoid" id="Q6AY84"/>
<dbReference type="OMA" id="HEWARSV"/>
<dbReference type="OrthoDB" id="5175656at2759"/>
<dbReference type="PhylomeDB" id="Q6AY84"/>
<dbReference type="TreeFam" id="TF323890"/>
<dbReference type="PRO" id="PR:Q6AY84"/>
<dbReference type="Proteomes" id="UP000002494">
    <property type="component" value="Chromosome 4"/>
</dbReference>
<dbReference type="Bgee" id="ENSRNOG00000009636">
    <property type="expression patterns" value="Expressed in cerebellum and 20 other cell types or tissues"/>
</dbReference>
<dbReference type="GO" id="GO:0005737">
    <property type="term" value="C:cytoplasm"/>
    <property type="evidence" value="ECO:0007669"/>
    <property type="project" value="UniProtKB-SubCell"/>
</dbReference>
<dbReference type="GO" id="GO:0031965">
    <property type="term" value="C:nuclear membrane"/>
    <property type="evidence" value="ECO:0000266"/>
    <property type="project" value="RGD"/>
</dbReference>
<dbReference type="GO" id="GO:0005634">
    <property type="term" value="C:nucleus"/>
    <property type="evidence" value="ECO:0000266"/>
    <property type="project" value="RGD"/>
</dbReference>
<dbReference type="GO" id="GO:0098793">
    <property type="term" value="C:presynapse"/>
    <property type="evidence" value="ECO:0000314"/>
    <property type="project" value="SynGO"/>
</dbReference>
<dbReference type="GO" id="GO:0070004">
    <property type="term" value="F:cysteine-type exopeptidase activity"/>
    <property type="evidence" value="ECO:0007669"/>
    <property type="project" value="InterPro"/>
</dbReference>
<dbReference type="GO" id="GO:0016805">
    <property type="term" value="F:dipeptidase activity"/>
    <property type="evidence" value="ECO:0007669"/>
    <property type="project" value="InterPro"/>
</dbReference>
<dbReference type="GO" id="GO:0006887">
    <property type="term" value="P:exocytosis"/>
    <property type="evidence" value="ECO:0007669"/>
    <property type="project" value="UniProtKB-KW"/>
</dbReference>
<dbReference type="GO" id="GO:0006508">
    <property type="term" value="P:proteolysis"/>
    <property type="evidence" value="ECO:0007669"/>
    <property type="project" value="InterPro"/>
</dbReference>
<dbReference type="GO" id="GO:0098693">
    <property type="term" value="P:regulation of synaptic vesicle cycle"/>
    <property type="evidence" value="ECO:0000314"/>
    <property type="project" value="SynGO"/>
</dbReference>
<dbReference type="FunFam" id="3.60.60.10:FF:000001">
    <property type="entry name" value="Secernin 1"/>
    <property type="match status" value="1"/>
</dbReference>
<dbReference type="Gene3D" id="3.60.60.10">
    <property type="entry name" value="Penicillin V Acylase, Chain A"/>
    <property type="match status" value="1"/>
</dbReference>
<dbReference type="InterPro" id="IPR005322">
    <property type="entry name" value="Peptidase_C69"/>
</dbReference>
<dbReference type="PANTHER" id="PTHR12994">
    <property type="entry name" value="SECERNIN"/>
    <property type="match status" value="1"/>
</dbReference>
<dbReference type="PANTHER" id="PTHR12994:SF7">
    <property type="entry name" value="SECERNIN-1"/>
    <property type="match status" value="1"/>
</dbReference>
<dbReference type="Pfam" id="PF03577">
    <property type="entry name" value="Peptidase_C69"/>
    <property type="match status" value="1"/>
</dbReference>
<accession>Q6AY84</accession>
<reference key="1">
    <citation type="journal article" date="2004" name="Genome Res.">
        <title>The status, quality, and expansion of the NIH full-length cDNA project: the Mammalian Gene Collection (MGC).</title>
        <authorList>
            <consortium name="The MGC Project Team"/>
        </authorList>
    </citation>
    <scope>NUCLEOTIDE SEQUENCE [LARGE SCALE MRNA]</scope>
    <source>
        <tissue>Kidney</tissue>
    </source>
</reference>
<reference key="2">
    <citation type="submission" date="2007-07" db="UniProtKB">
        <authorList>
            <person name="Lubec G."/>
            <person name="Afjehi-Sadat L."/>
            <person name="Kang S.U."/>
        </authorList>
    </citation>
    <scope>PROTEIN SEQUENCE OF 303-315 AND 356-366</scope>
    <scope>IDENTIFICATION BY MASS SPECTROMETRY</scope>
    <source>
        <strain>Sprague-Dawley</strain>
        <tissue>Brain</tissue>
        <tissue>Spinal cord</tissue>
    </source>
</reference>
<organism>
    <name type="scientific">Rattus norvegicus</name>
    <name type="common">Rat</name>
    <dbReference type="NCBI Taxonomy" id="10116"/>
    <lineage>
        <taxon>Eukaryota</taxon>
        <taxon>Metazoa</taxon>
        <taxon>Chordata</taxon>
        <taxon>Craniata</taxon>
        <taxon>Vertebrata</taxon>
        <taxon>Euteleostomi</taxon>
        <taxon>Mammalia</taxon>
        <taxon>Eutheria</taxon>
        <taxon>Euarchontoglires</taxon>
        <taxon>Glires</taxon>
        <taxon>Rodentia</taxon>
        <taxon>Myomorpha</taxon>
        <taxon>Muroidea</taxon>
        <taxon>Muridae</taxon>
        <taxon>Murinae</taxon>
        <taxon>Rattus</taxon>
    </lineage>
</organism>
<keyword id="KW-0963">Cytoplasm</keyword>
<keyword id="KW-0903">Direct protein sequencing</keyword>
<keyword id="KW-0268">Exocytosis</keyword>
<keyword id="KW-1185">Reference proteome</keyword>